<gene>
    <name evidence="1" type="primary">pckG</name>
    <name type="ordered locus">BCG_0248</name>
</gene>
<sequence length="606" mass="67253">MTSATIPGLDTAPTNHQGLLSWVEEVAELTQPDRVVFTDGSEEEFQRLCDQLVEAGTFIRLNPEKHKNSYLALSDPSDVARVESRTYICSAKEIDAGPTNNWMDPGEMRSIMKDLYRGCMRGRTMYVVPFCMGPLGAEDPKLGVEITDSEYVVVSMRTMTRMGKAALEKMGDDGFFVKALHSVGAPLEPGQKDVAWPCSETKYITHFPETREIWSYGSGYGGNALLGKKCYSLRIASAMAHDEGWLAEHMLILKLISPENKAYYFAAAFPSACGKTNLAMLQPTIPGWRAETLGDDIAWMRFGKDGRLYAVNPEFGFFGVAPGTNWKSNPNAMRTIAAGNTVFTNVALTDDGDVWWEGLEGDPQHLIDWKGNDWYFRETETNAAHPNSRYCTPMSQCPILAPEWDDPQGVPISGILFGGRRKTTVPLVTEARDWQHGVFIGATLGSEQTAAAEGKVGNVRRDPMAMLPFLGYNVGDYFQHWINLGKHADESKLPKVFFVNWFRRGDDGRFLWPGFGENSRVLKWIVDRIEHKAGGATTPIGTVPAVEDLDLDGLDVDAADVAAALAVDADEWRQELPLIEEWLQFVGEKLPTGVKDEFDALKERLG</sequence>
<dbReference type="EC" id="4.1.1.32" evidence="1"/>
<dbReference type="EMBL" id="AM408590">
    <property type="protein sequence ID" value="CAL70232.1"/>
    <property type="molecule type" value="Genomic_DNA"/>
</dbReference>
<dbReference type="RefSeq" id="WP_003401212.1">
    <property type="nucleotide sequence ID" value="NC_008769.1"/>
</dbReference>
<dbReference type="SMR" id="A1KF31"/>
<dbReference type="KEGG" id="mbb:BCG_0248"/>
<dbReference type="HOGENOM" id="CLU_028872_1_1_11"/>
<dbReference type="UniPathway" id="UPA00138"/>
<dbReference type="Proteomes" id="UP000001472">
    <property type="component" value="Chromosome"/>
</dbReference>
<dbReference type="GO" id="GO:0005829">
    <property type="term" value="C:cytosol"/>
    <property type="evidence" value="ECO:0007669"/>
    <property type="project" value="TreeGrafter"/>
</dbReference>
<dbReference type="GO" id="GO:0005525">
    <property type="term" value="F:GTP binding"/>
    <property type="evidence" value="ECO:0007669"/>
    <property type="project" value="UniProtKB-UniRule"/>
</dbReference>
<dbReference type="GO" id="GO:0030145">
    <property type="term" value="F:manganese ion binding"/>
    <property type="evidence" value="ECO:0007669"/>
    <property type="project" value="UniProtKB-UniRule"/>
</dbReference>
<dbReference type="GO" id="GO:0004613">
    <property type="term" value="F:phosphoenolpyruvate carboxykinase (GTP) activity"/>
    <property type="evidence" value="ECO:0007669"/>
    <property type="project" value="UniProtKB-UniRule"/>
</dbReference>
<dbReference type="GO" id="GO:0071333">
    <property type="term" value="P:cellular response to glucose stimulus"/>
    <property type="evidence" value="ECO:0007669"/>
    <property type="project" value="TreeGrafter"/>
</dbReference>
<dbReference type="GO" id="GO:0006094">
    <property type="term" value="P:gluconeogenesis"/>
    <property type="evidence" value="ECO:0007669"/>
    <property type="project" value="UniProtKB-UniRule"/>
</dbReference>
<dbReference type="GO" id="GO:0046327">
    <property type="term" value="P:glycerol biosynthetic process from pyruvate"/>
    <property type="evidence" value="ECO:0007669"/>
    <property type="project" value="TreeGrafter"/>
</dbReference>
<dbReference type="GO" id="GO:0006107">
    <property type="term" value="P:oxaloacetate metabolic process"/>
    <property type="evidence" value="ECO:0007669"/>
    <property type="project" value="TreeGrafter"/>
</dbReference>
<dbReference type="GO" id="GO:0019543">
    <property type="term" value="P:propionate catabolic process"/>
    <property type="evidence" value="ECO:0007669"/>
    <property type="project" value="TreeGrafter"/>
</dbReference>
<dbReference type="GO" id="GO:0033993">
    <property type="term" value="P:response to lipid"/>
    <property type="evidence" value="ECO:0007669"/>
    <property type="project" value="TreeGrafter"/>
</dbReference>
<dbReference type="GO" id="GO:0042594">
    <property type="term" value="P:response to starvation"/>
    <property type="evidence" value="ECO:0007669"/>
    <property type="project" value="TreeGrafter"/>
</dbReference>
<dbReference type="CDD" id="cd00819">
    <property type="entry name" value="PEPCK_GTP"/>
    <property type="match status" value="1"/>
</dbReference>
<dbReference type="FunFam" id="3.40.449.10:FF:000005">
    <property type="entry name" value="Phosphoenolpyruvate carboxykinase [GTP]"/>
    <property type="match status" value="1"/>
</dbReference>
<dbReference type="Gene3D" id="3.90.228.20">
    <property type="match status" value="1"/>
</dbReference>
<dbReference type="Gene3D" id="3.40.449.10">
    <property type="entry name" value="Phosphoenolpyruvate Carboxykinase, domain 1"/>
    <property type="match status" value="1"/>
</dbReference>
<dbReference type="Gene3D" id="2.170.8.10">
    <property type="entry name" value="Phosphoenolpyruvate Carboxykinase, domain 2"/>
    <property type="match status" value="1"/>
</dbReference>
<dbReference type="HAMAP" id="MF_00452">
    <property type="entry name" value="PEPCK_GTP"/>
    <property type="match status" value="1"/>
</dbReference>
<dbReference type="InterPro" id="IPR018091">
    <property type="entry name" value="PEP_carboxykin_GTP_CS"/>
</dbReference>
<dbReference type="InterPro" id="IPR013035">
    <property type="entry name" value="PEP_carboxykinase_C"/>
</dbReference>
<dbReference type="InterPro" id="IPR008209">
    <property type="entry name" value="PEP_carboxykinase_GTP"/>
</dbReference>
<dbReference type="InterPro" id="IPR035077">
    <property type="entry name" value="PEP_carboxykinase_GTP_C"/>
</dbReference>
<dbReference type="InterPro" id="IPR035078">
    <property type="entry name" value="PEP_carboxykinase_GTP_N"/>
</dbReference>
<dbReference type="InterPro" id="IPR008210">
    <property type="entry name" value="PEP_carboxykinase_N"/>
</dbReference>
<dbReference type="NCBIfam" id="NF003253">
    <property type="entry name" value="PRK04210.1"/>
    <property type="match status" value="1"/>
</dbReference>
<dbReference type="PANTHER" id="PTHR11561">
    <property type="entry name" value="PHOSPHOENOLPYRUVATE CARBOXYKINASE"/>
    <property type="match status" value="1"/>
</dbReference>
<dbReference type="PANTHER" id="PTHR11561:SF0">
    <property type="entry name" value="PHOSPHOENOLPYRUVATE CARBOXYKINASE [GTP]-RELATED"/>
    <property type="match status" value="1"/>
</dbReference>
<dbReference type="Pfam" id="PF00821">
    <property type="entry name" value="PEPCK_GTP"/>
    <property type="match status" value="1"/>
</dbReference>
<dbReference type="Pfam" id="PF17297">
    <property type="entry name" value="PEPCK_N"/>
    <property type="match status" value="1"/>
</dbReference>
<dbReference type="PIRSF" id="PIRSF001348">
    <property type="entry name" value="PEP_carboxykinase_GTP"/>
    <property type="match status" value="1"/>
</dbReference>
<dbReference type="SUPFAM" id="SSF68923">
    <property type="entry name" value="PEP carboxykinase N-terminal domain"/>
    <property type="match status" value="1"/>
</dbReference>
<dbReference type="SUPFAM" id="SSF53795">
    <property type="entry name" value="PEP carboxykinase-like"/>
    <property type="match status" value="1"/>
</dbReference>
<dbReference type="PROSITE" id="PS00505">
    <property type="entry name" value="PEPCK_GTP"/>
    <property type="match status" value="1"/>
</dbReference>
<accession>A1KF31</accession>
<organism>
    <name type="scientific">Mycobacterium bovis (strain BCG / Pasteur 1173P2)</name>
    <dbReference type="NCBI Taxonomy" id="410289"/>
    <lineage>
        <taxon>Bacteria</taxon>
        <taxon>Bacillati</taxon>
        <taxon>Actinomycetota</taxon>
        <taxon>Actinomycetes</taxon>
        <taxon>Mycobacteriales</taxon>
        <taxon>Mycobacteriaceae</taxon>
        <taxon>Mycobacterium</taxon>
        <taxon>Mycobacterium tuberculosis complex</taxon>
    </lineage>
</organism>
<reference key="1">
    <citation type="journal article" date="2007" name="Proc. Natl. Acad. Sci. U.S.A.">
        <title>Genome plasticity of BCG and impact on vaccine efficacy.</title>
        <authorList>
            <person name="Brosch R."/>
            <person name="Gordon S.V."/>
            <person name="Garnier T."/>
            <person name="Eiglmeier K."/>
            <person name="Frigui W."/>
            <person name="Valenti P."/>
            <person name="Dos Santos S."/>
            <person name="Duthoy S."/>
            <person name="Lacroix C."/>
            <person name="Garcia-Pelayo C."/>
            <person name="Inwald J.K."/>
            <person name="Golby P."/>
            <person name="Garcia J.N."/>
            <person name="Hewinson R.G."/>
            <person name="Behr M.A."/>
            <person name="Quail M.A."/>
            <person name="Churcher C."/>
            <person name="Barrell B.G."/>
            <person name="Parkhill J."/>
            <person name="Cole S.T."/>
        </authorList>
    </citation>
    <scope>NUCLEOTIDE SEQUENCE [LARGE SCALE GENOMIC DNA]</scope>
    <source>
        <strain>BCG / Pasteur 1173P2</strain>
    </source>
</reference>
<reference key="2">
    <citation type="journal article" date="2003" name="Microbiology">
        <title>pckA-deficient Mycobacterium bovis BCG shows attenuated virulence in mice and in macrophages.</title>
        <authorList>
            <person name="Liu K."/>
            <person name="Yu J."/>
            <person name="Russell D.G."/>
        </authorList>
    </citation>
    <scope>FUNCTION</scope>
    <scope>DISRUPTION PHENOTYPE</scope>
    <scope>INDUCTION</scope>
</reference>
<protein>
    <recommendedName>
        <fullName evidence="1 3">Phosphoenolpyruvate carboxykinase [GTP]</fullName>
        <shortName evidence="1 3">PEP carboxykinase</shortName>
        <shortName evidence="1 3">PEPCK</shortName>
        <ecNumber evidence="1">4.1.1.32</ecNumber>
    </recommendedName>
    <alternativeName>
        <fullName evidence="1">GTP-dependent phosphoenolpyruvate carboxykinase</fullName>
        <shortName evidence="1">GTP-PEPCK</shortName>
    </alternativeName>
</protein>
<evidence type="ECO:0000255" key="1">
    <source>
        <dbReference type="HAMAP-Rule" id="MF_00452"/>
    </source>
</evidence>
<evidence type="ECO:0000269" key="2">
    <source>
    </source>
</evidence>
<evidence type="ECO:0000303" key="3">
    <source>
    </source>
</evidence>
<proteinExistence type="evidence at transcript level"/>
<comment type="function">
    <text evidence="2">Involved in the gluconeogenesis, in growth on fatty acids and is important for initiation of infection in the macrophages. Catalyzes the GTP-dependent conversion of oxaloacetate (OAA) to phosphoenolpyruvate (PEP), the rate-limiting step in the metabolic pathway that produces glucose from lactate and other precursors derived from the citric acid cycle.</text>
</comment>
<comment type="catalytic activity">
    <reaction evidence="1">
        <text>oxaloacetate + GTP = phosphoenolpyruvate + GDP + CO2</text>
        <dbReference type="Rhea" id="RHEA:10388"/>
        <dbReference type="ChEBI" id="CHEBI:16452"/>
        <dbReference type="ChEBI" id="CHEBI:16526"/>
        <dbReference type="ChEBI" id="CHEBI:37565"/>
        <dbReference type="ChEBI" id="CHEBI:58189"/>
        <dbReference type="ChEBI" id="CHEBI:58702"/>
        <dbReference type="EC" id="4.1.1.32"/>
    </reaction>
</comment>
<comment type="cofactor">
    <cofactor evidence="1">
        <name>Mn(2+)</name>
        <dbReference type="ChEBI" id="CHEBI:29035"/>
    </cofactor>
    <text evidence="1">Binds 1 Mn(2+) ion per subunit.</text>
</comment>
<comment type="pathway">
    <text evidence="1">Carbohydrate biosynthesis; gluconeogenesis.</text>
</comment>
<comment type="subunit">
    <text evidence="1">Monomer.</text>
</comment>
<comment type="subcellular location">
    <subcellularLocation>
        <location evidence="1">Cytoplasm</location>
    </subcellularLocation>
</comment>
<comment type="induction">
    <text evidence="2">Up-regulated by acetate or palmitate but down-regulated by glucose.</text>
</comment>
<comment type="disruption phenotype">
    <text evidence="2">Cells lacking this gene show a reduction in the capacity to infect and survive in macrophages. Moreover, mice infected with this mutant are able to reduce the bacterial load much more effectively than mice infected with the parental wild-type bacteria.</text>
</comment>
<comment type="similarity">
    <text evidence="1">Belongs to the phosphoenolpyruvate carboxykinase [GTP] family.</text>
</comment>
<name>PCKG_MYCBP</name>
<feature type="chain" id="PRO_1000060291" description="Phosphoenolpyruvate carboxykinase [GTP]">
    <location>
        <begin position="1"/>
        <end position="606"/>
    </location>
</feature>
<feature type="active site" evidence="1">
    <location>
        <position position="273"/>
    </location>
</feature>
<feature type="binding site" evidence="1">
    <location>
        <position position="81"/>
    </location>
    <ligand>
        <name>substrate</name>
    </ligand>
</feature>
<feature type="binding site" evidence="1">
    <location>
        <begin position="220"/>
        <end position="222"/>
    </location>
    <ligand>
        <name>substrate</name>
    </ligand>
</feature>
<feature type="binding site" evidence="1">
    <location>
        <position position="229"/>
    </location>
    <ligand>
        <name>Mn(2+)</name>
        <dbReference type="ChEBI" id="CHEBI:29035"/>
    </ligand>
</feature>
<feature type="binding site" evidence="1">
    <location>
        <position position="249"/>
    </location>
    <ligand>
        <name>Mn(2+)</name>
        <dbReference type="ChEBI" id="CHEBI:29035"/>
    </ligand>
</feature>
<feature type="binding site" evidence="1">
    <location>
        <position position="271"/>
    </location>
    <ligand>
        <name>substrate</name>
    </ligand>
</feature>
<feature type="binding site" evidence="1">
    <location>
        <begin position="272"/>
        <end position="277"/>
    </location>
    <ligand>
        <name>GTP</name>
        <dbReference type="ChEBI" id="CHEBI:37565"/>
    </ligand>
</feature>
<feature type="binding site" evidence="1">
    <location>
        <position position="296"/>
    </location>
    <ligand>
        <name>Mn(2+)</name>
        <dbReference type="ChEBI" id="CHEBI:29035"/>
    </ligand>
</feature>
<feature type="binding site" evidence="1">
    <location>
        <begin position="387"/>
        <end position="389"/>
    </location>
    <ligand>
        <name>substrate</name>
    </ligand>
</feature>
<feature type="binding site" evidence="1">
    <location>
        <position position="389"/>
    </location>
    <ligand>
        <name>GTP</name>
        <dbReference type="ChEBI" id="CHEBI:37565"/>
    </ligand>
</feature>
<feature type="binding site" evidence="1">
    <location>
        <position position="420"/>
    </location>
    <ligand>
        <name>GTP</name>
        <dbReference type="ChEBI" id="CHEBI:37565"/>
    </ligand>
</feature>
<feature type="binding site" evidence="1">
    <location>
        <begin position="515"/>
        <end position="518"/>
    </location>
    <ligand>
        <name>GTP</name>
        <dbReference type="ChEBI" id="CHEBI:37565"/>
    </ligand>
</feature>
<keyword id="KW-0963">Cytoplasm</keyword>
<keyword id="KW-0210">Decarboxylase</keyword>
<keyword id="KW-0312">Gluconeogenesis</keyword>
<keyword id="KW-0342">GTP-binding</keyword>
<keyword id="KW-0456">Lyase</keyword>
<keyword id="KW-0464">Manganese</keyword>
<keyword id="KW-0479">Metal-binding</keyword>
<keyword id="KW-0547">Nucleotide-binding</keyword>